<accession>B2S903</accession>
<sequence>MTADVPNARLVDVELDESIGRSTPDVEHERAVAIFDLIEENSFHPVGDQKGGPYRLKLSLMESRLIFSITRENGDAVATHILSLTPLRRVVRDYFMICESYYQAIRSATPSKIEAIDMGRRGLHNEGSQTLQARLKGKIEVDFDTARRLFTLVCVLHWRG</sequence>
<evidence type="ECO:0000255" key="1">
    <source>
        <dbReference type="HAMAP-Rule" id="MF_00678"/>
    </source>
</evidence>
<proteinExistence type="inferred from homology"/>
<protein>
    <recommendedName>
        <fullName evidence="1">UPF0262 protein BAbS19_I02590</fullName>
    </recommendedName>
</protein>
<dbReference type="EMBL" id="CP000887">
    <property type="protein sequence ID" value="ACD71802.1"/>
    <property type="molecule type" value="Genomic_DNA"/>
</dbReference>
<dbReference type="RefSeq" id="WP_002965533.1">
    <property type="nucleotide sequence ID" value="NC_010742.1"/>
</dbReference>
<dbReference type="KEGG" id="bmc:BAbS19_I02590"/>
<dbReference type="HOGENOM" id="CLU_112904_0_0_5"/>
<dbReference type="Proteomes" id="UP000002565">
    <property type="component" value="Chromosome 1"/>
</dbReference>
<dbReference type="HAMAP" id="MF_00678">
    <property type="entry name" value="UPF0262"/>
    <property type="match status" value="1"/>
</dbReference>
<dbReference type="InterPro" id="IPR008321">
    <property type="entry name" value="UCP032146"/>
</dbReference>
<dbReference type="NCBIfam" id="NF002769">
    <property type="entry name" value="PRK02853.1"/>
    <property type="match status" value="1"/>
</dbReference>
<dbReference type="Pfam" id="PF06793">
    <property type="entry name" value="UPF0262"/>
    <property type="match status" value="1"/>
</dbReference>
<dbReference type="PIRSF" id="PIRSF032146">
    <property type="entry name" value="UCP032146"/>
    <property type="match status" value="1"/>
</dbReference>
<comment type="similarity">
    <text evidence="1">Belongs to the UPF0262 family.</text>
</comment>
<feature type="chain" id="PRO_1000131647" description="UPF0262 protein BAbS19_I02590">
    <location>
        <begin position="1"/>
        <end position="160"/>
    </location>
</feature>
<name>Y2590_BRUA1</name>
<reference key="1">
    <citation type="journal article" date="2008" name="PLoS ONE">
        <title>Genome sequence of Brucella abortus vaccine strain S19 compared to virulent strains yields candidate virulence genes.</title>
        <authorList>
            <person name="Crasta O.R."/>
            <person name="Folkerts O."/>
            <person name="Fei Z."/>
            <person name="Mane S.P."/>
            <person name="Evans C."/>
            <person name="Martino-Catt S."/>
            <person name="Bricker B."/>
            <person name="Yu G."/>
            <person name="Du L."/>
            <person name="Sobral B.W."/>
        </authorList>
    </citation>
    <scope>NUCLEOTIDE SEQUENCE [LARGE SCALE GENOMIC DNA]</scope>
    <source>
        <strain>S19</strain>
    </source>
</reference>
<organism>
    <name type="scientific">Brucella abortus (strain S19)</name>
    <dbReference type="NCBI Taxonomy" id="430066"/>
    <lineage>
        <taxon>Bacteria</taxon>
        <taxon>Pseudomonadati</taxon>
        <taxon>Pseudomonadota</taxon>
        <taxon>Alphaproteobacteria</taxon>
        <taxon>Hyphomicrobiales</taxon>
        <taxon>Brucellaceae</taxon>
        <taxon>Brucella/Ochrobactrum group</taxon>
        <taxon>Brucella</taxon>
    </lineage>
</organism>
<gene>
    <name type="ordered locus">BAbS19_I02590</name>
</gene>